<name>PPR11_ARATH</name>
<keyword id="KW-1185">Reference proteome</keyword>
<keyword id="KW-0677">Repeat</keyword>
<sequence>MSVVRWPRVLTPSLLSQILKKQKNPVTALKLFEEAKERFPSYGHNGSVYATMIDILGKSNRVLEMKYVIERMKEDSCECKDSVFASVIRTFSRAGRLEDAISLFKSLHEFNCVNWSLSFDTLLQEMVKESELEAACHIFRKYCYGWEVNSRITALNLLMKVLCQVNRSDLASQVFQEMNYQGCYPDRDSYRILMKGFCLEGKLEEATHLLYSMFWRISQKGSGEDIVVYRILLDALCDAGEVDDAIEILGKILRKGLKAPKRCYHHIEAGHWESSSEGIERVKRLLTETLIRGAIPCLDSYSAMATDLFEEGKLVEGEEVLLAMRSKGFEPTPFIYGAKVKALCRAGKLKEAVSVINKEMMQGHCLPTVGVYNVLIKGLCDDGKSMEAVGYLKKMSKQVSCVANEETYQTLVDGLCRDGQFLEASQVMEEMLIKSHFPGVETYHMMIKGLCDMDRRYEAVMWLEEMVSQDMVPESSVWKALAESVCFCAIDVVEILEHLISSKR</sequence>
<evidence type="ECO:0000305" key="1"/>
<organism>
    <name type="scientific">Arabidopsis thaliana</name>
    <name type="common">Mouse-ear cress</name>
    <dbReference type="NCBI Taxonomy" id="3702"/>
    <lineage>
        <taxon>Eukaryota</taxon>
        <taxon>Viridiplantae</taxon>
        <taxon>Streptophyta</taxon>
        <taxon>Embryophyta</taxon>
        <taxon>Tracheophyta</taxon>
        <taxon>Spermatophyta</taxon>
        <taxon>Magnoliopsida</taxon>
        <taxon>eudicotyledons</taxon>
        <taxon>Gunneridae</taxon>
        <taxon>Pentapetalae</taxon>
        <taxon>rosids</taxon>
        <taxon>malvids</taxon>
        <taxon>Brassicales</taxon>
        <taxon>Brassicaceae</taxon>
        <taxon>Camelineae</taxon>
        <taxon>Arabidopsis</taxon>
    </lineage>
</organism>
<protein>
    <recommendedName>
        <fullName>Pentatricopeptide repeat-containing protein At1g05600</fullName>
    </recommendedName>
</protein>
<proteinExistence type="evidence at transcript level"/>
<accession>Q9SYK1</accession>
<gene>
    <name type="ordered locus">At1g05600</name>
    <name type="ORF">F3F20.5</name>
</gene>
<dbReference type="EMBL" id="AC007153">
    <property type="protein sequence ID" value="AAD30626.1"/>
    <property type="molecule type" value="Genomic_DNA"/>
</dbReference>
<dbReference type="EMBL" id="CP002684">
    <property type="protein sequence ID" value="AEE27862.1"/>
    <property type="molecule type" value="Genomic_DNA"/>
</dbReference>
<dbReference type="EMBL" id="CP002684">
    <property type="protein sequence ID" value="AEE27863.1"/>
    <property type="molecule type" value="Genomic_DNA"/>
</dbReference>
<dbReference type="EMBL" id="CP002684">
    <property type="protein sequence ID" value="ANM58120.1"/>
    <property type="molecule type" value="Genomic_DNA"/>
</dbReference>
<dbReference type="EMBL" id="BT015830">
    <property type="protein sequence ID" value="AAU94393.1"/>
    <property type="molecule type" value="mRNA"/>
</dbReference>
<dbReference type="EMBL" id="BT020451">
    <property type="protein sequence ID" value="AAW30029.1"/>
    <property type="molecule type" value="mRNA"/>
</dbReference>
<dbReference type="PIR" id="A86190">
    <property type="entry name" value="A86190"/>
</dbReference>
<dbReference type="RefSeq" id="NP_001184914.1">
    <property type="nucleotide sequence ID" value="NM_001197985.2"/>
</dbReference>
<dbReference type="RefSeq" id="NP_001318928.1">
    <property type="nucleotide sequence ID" value="NM_001331559.1"/>
</dbReference>
<dbReference type="RefSeq" id="NP_172051.1">
    <property type="nucleotide sequence ID" value="NM_100440.2"/>
</dbReference>
<dbReference type="SMR" id="Q9SYK1"/>
<dbReference type="BioGRID" id="22307">
    <property type="interactions" value="1"/>
</dbReference>
<dbReference type="FunCoup" id="Q9SYK1">
    <property type="interactions" value="827"/>
</dbReference>
<dbReference type="STRING" id="3702.Q9SYK1"/>
<dbReference type="PaxDb" id="3702-AT1G05600.2"/>
<dbReference type="EnsemblPlants" id="AT1G05600.1">
    <property type="protein sequence ID" value="AT1G05600.1"/>
    <property type="gene ID" value="AT1G05600"/>
</dbReference>
<dbReference type="EnsemblPlants" id="AT1G05600.2">
    <property type="protein sequence ID" value="AT1G05600.2"/>
    <property type="gene ID" value="AT1G05600"/>
</dbReference>
<dbReference type="EnsemblPlants" id="AT1G05600.3">
    <property type="protein sequence ID" value="AT1G05600.3"/>
    <property type="gene ID" value="AT1G05600"/>
</dbReference>
<dbReference type="GeneID" id="837065"/>
<dbReference type="Gramene" id="AT1G05600.1">
    <property type="protein sequence ID" value="AT1G05600.1"/>
    <property type="gene ID" value="AT1G05600"/>
</dbReference>
<dbReference type="Gramene" id="AT1G05600.2">
    <property type="protein sequence ID" value="AT1G05600.2"/>
    <property type="gene ID" value="AT1G05600"/>
</dbReference>
<dbReference type="Gramene" id="AT1G05600.3">
    <property type="protein sequence ID" value="AT1G05600.3"/>
    <property type="gene ID" value="AT1G05600"/>
</dbReference>
<dbReference type="KEGG" id="ath:AT1G05600"/>
<dbReference type="Araport" id="AT1G05600"/>
<dbReference type="TAIR" id="AT1G05600">
    <property type="gene designation" value="EMB3101"/>
</dbReference>
<dbReference type="eggNOG" id="KOG4197">
    <property type="taxonomic scope" value="Eukaryota"/>
</dbReference>
<dbReference type="HOGENOM" id="CLU_041846_0_0_1"/>
<dbReference type="InParanoid" id="Q9SYK1"/>
<dbReference type="OMA" id="VIWLEEM"/>
<dbReference type="PhylomeDB" id="Q9SYK1"/>
<dbReference type="PRO" id="PR:Q9SYK1"/>
<dbReference type="Proteomes" id="UP000006548">
    <property type="component" value="Chromosome 1"/>
</dbReference>
<dbReference type="ExpressionAtlas" id="Q9SYK1">
    <property type="expression patterns" value="baseline and differential"/>
</dbReference>
<dbReference type="Gene3D" id="1.25.40.10">
    <property type="entry name" value="Tetratricopeptide repeat domain"/>
    <property type="match status" value="4"/>
</dbReference>
<dbReference type="InterPro" id="IPR002885">
    <property type="entry name" value="Pentatricopeptide_rpt"/>
</dbReference>
<dbReference type="InterPro" id="IPR011990">
    <property type="entry name" value="TPR-like_helical_dom_sf"/>
</dbReference>
<dbReference type="NCBIfam" id="TIGR00756">
    <property type="entry name" value="PPR"/>
    <property type="match status" value="8"/>
</dbReference>
<dbReference type="PANTHER" id="PTHR47941">
    <property type="entry name" value="PENTATRICOPEPTIDE REPEAT-CONTAINING PROTEIN 3, MITOCHONDRIAL"/>
    <property type="match status" value="1"/>
</dbReference>
<dbReference type="Pfam" id="PF01535">
    <property type="entry name" value="PPR"/>
    <property type="match status" value="4"/>
</dbReference>
<dbReference type="Pfam" id="PF12854">
    <property type="entry name" value="PPR_1"/>
    <property type="match status" value="2"/>
</dbReference>
<dbReference type="Pfam" id="PF13041">
    <property type="entry name" value="PPR_2"/>
    <property type="match status" value="2"/>
</dbReference>
<dbReference type="PROSITE" id="PS51375">
    <property type="entry name" value="PPR"/>
    <property type="match status" value="10"/>
</dbReference>
<comment type="similarity">
    <text evidence="1">Belongs to the PPR family. P subfamily.</text>
</comment>
<comment type="online information" name="Pentatricopeptide repeat proteins">
    <link uri="https://ppr.plantenergy.uwa.edu.au"/>
</comment>
<reference key="1">
    <citation type="journal article" date="2000" name="Nature">
        <title>Sequence and analysis of chromosome 1 of the plant Arabidopsis thaliana.</title>
        <authorList>
            <person name="Theologis A."/>
            <person name="Ecker J.R."/>
            <person name="Palm C.J."/>
            <person name="Federspiel N.A."/>
            <person name="Kaul S."/>
            <person name="White O."/>
            <person name="Alonso J."/>
            <person name="Altafi H."/>
            <person name="Araujo R."/>
            <person name="Bowman C.L."/>
            <person name="Brooks S.Y."/>
            <person name="Buehler E."/>
            <person name="Chan A."/>
            <person name="Chao Q."/>
            <person name="Chen H."/>
            <person name="Cheuk R.F."/>
            <person name="Chin C.W."/>
            <person name="Chung M.K."/>
            <person name="Conn L."/>
            <person name="Conway A.B."/>
            <person name="Conway A.R."/>
            <person name="Creasy T.H."/>
            <person name="Dewar K."/>
            <person name="Dunn P."/>
            <person name="Etgu P."/>
            <person name="Feldblyum T.V."/>
            <person name="Feng J.-D."/>
            <person name="Fong B."/>
            <person name="Fujii C.Y."/>
            <person name="Gill J.E."/>
            <person name="Goldsmith A.D."/>
            <person name="Haas B."/>
            <person name="Hansen N.F."/>
            <person name="Hughes B."/>
            <person name="Huizar L."/>
            <person name="Hunter J.L."/>
            <person name="Jenkins J."/>
            <person name="Johnson-Hopson C."/>
            <person name="Khan S."/>
            <person name="Khaykin E."/>
            <person name="Kim C.J."/>
            <person name="Koo H.L."/>
            <person name="Kremenetskaia I."/>
            <person name="Kurtz D.B."/>
            <person name="Kwan A."/>
            <person name="Lam B."/>
            <person name="Langin-Hooper S."/>
            <person name="Lee A."/>
            <person name="Lee J.M."/>
            <person name="Lenz C.A."/>
            <person name="Li J.H."/>
            <person name="Li Y.-P."/>
            <person name="Lin X."/>
            <person name="Liu S.X."/>
            <person name="Liu Z.A."/>
            <person name="Luros J.S."/>
            <person name="Maiti R."/>
            <person name="Marziali A."/>
            <person name="Militscher J."/>
            <person name="Miranda M."/>
            <person name="Nguyen M."/>
            <person name="Nierman W.C."/>
            <person name="Osborne B.I."/>
            <person name="Pai G."/>
            <person name="Peterson J."/>
            <person name="Pham P.K."/>
            <person name="Rizzo M."/>
            <person name="Rooney T."/>
            <person name="Rowley D."/>
            <person name="Sakano H."/>
            <person name="Salzberg S.L."/>
            <person name="Schwartz J.R."/>
            <person name="Shinn P."/>
            <person name="Southwick A.M."/>
            <person name="Sun H."/>
            <person name="Tallon L.J."/>
            <person name="Tambunga G."/>
            <person name="Toriumi M.J."/>
            <person name="Town C.D."/>
            <person name="Utterback T."/>
            <person name="Van Aken S."/>
            <person name="Vaysberg M."/>
            <person name="Vysotskaia V.S."/>
            <person name="Walker M."/>
            <person name="Wu D."/>
            <person name="Yu G."/>
            <person name="Fraser C.M."/>
            <person name="Venter J.C."/>
            <person name="Davis R.W."/>
        </authorList>
    </citation>
    <scope>NUCLEOTIDE SEQUENCE [LARGE SCALE GENOMIC DNA]</scope>
    <source>
        <strain>cv. Columbia</strain>
    </source>
</reference>
<reference key="2">
    <citation type="journal article" date="2017" name="Plant J.">
        <title>Araport11: a complete reannotation of the Arabidopsis thaliana reference genome.</title>
        <authorList>
            <person name="Cheng C.Y."/>
            <person name="Krishnakumar V."/>
            <person name="Chan A.P."/>
            <person name="Thibaud-Nissen F."/>
            <person name="Schobel S."/>
            <person name="Town C.D."/>
        </authorList>
    </citation>
    <scope>GENOME REANNOTATION</scope>
    <source>
        <strain>cv. Columbia</strain>
    </source>
</reference>
<reference key="3">
    <citation type="submission" date="2004-12" db="EMBL/GenBank/DDBJ databases">
        <title>Arabidopsis ORF clones.</title>
        <authorList>
            <person name="Shinn P."/>
            <person name="Chen H."/>
            <person name="Cheuk R.F."/>
            <person name="Kim C.J."/>
            <person name="Ecker J.R."/>
        </authorList>
    </citation>
    <scope>NUCLEOTIDE SEQUENCE [LARGE SCALE MRNA]</scope>
    <source>
        <strain>cv. Columbia</strain>
    </source>
</reference>
<reference key="4">
    <citation type="journal article" date="2004" name="Plant Cell">
        <title>Genome-wide analysis of Arabidopsis pentatricopeptide repeat proteins reveals their essential role in organelle biogenesis.</title>
        <authorList>
            <person name="Lurin C."/>
            <person name="Andres C."/>
            <person name="Aubourg S."/>
            <person name="Bellaoui M."/>
            <person name="Bitton F."/>
            <person name="Bruyere C."/>
            <person name="Caboche M."/>
            <person name="Debast C."/>
            <person name="Gualberto J."/>
            <person name="Hoffmann B."/>
            <person name="Lecharny A."/>
            <person name="Le Ret M."/>
            <person name="Martin-Magniette M.-L."/>
            <person name="Mireau H."/>
            <person name="Peeters N."/>
            <person name="Renou J.-P."/>
            <person name="Szurek B."/>
            <person name="Taconnat L."/>
            <person name="Small I."/>
        </authorList>
    </citation>
    <scope>GENE FAMILY</scope>
</reference>
<feature type="chain" id="PRO_0000342752" description="Pentatricopeptide repeat-containing protein At1g05600">
    <location>
        <begin position="1"/>
        <end position="504"/>
    </location>
</feature>
<feature type="repeat" description="PPR 1">
    <location>
        <begin position="45"/>
        <end position="79"/>
    </location>
</feature>
<feature type="repeat" description="PPR 2">
    <location>
        <begin position="80"/>
        <end position="114"/>
    </location>
</feature>
<feature type="repeat" description="PPR 3">
    <location>
        <begin position="115"/>
        <end position="145"/>
    </location>
</feature>
<feature type="repeat" description="PPR 4">
    <location>
        <begin position="151"/>
        <end position="185"/>
    </location>
</feature>
<feature type="repeat" description="PPR 5">
    <location>
        <begin position="186"/>
        <end position="216"/>
    </location>
</feature>
<feature type="repeat" description="PPR 6">
    <location>
        <begin position="225"/>
        <end position="259"/>
    </location>
</feature>
<feature type="repeat" description="PPR 7">
    <location>
        <begin position="260"/>
        <end position="296"/>
    </location>
</feature>
<feature type="repeat" description="PPR 8">
    <location>
        <begin position="297"/>
        <end position="331"/>
    </location>
</feature>
<feature type="repeat" description="PPR 9">
    <location>
        <begin position="332"/>
        <end position="367"/>
    </location>
</feature>
<feature type="repeat" description="PPR 10">
    <location>
        <begin position="368"/>
        <end position="398"/>
    </location>
</feature>
<feature type="repeat" description="PPR 11">
    <location>
        <begin position="404"/>
        <end position="438"/>
    </location>
</feature>
<feature type="repeat" description="PPR 12">
    <location>
        <begin position="439"/>
        <end position="473"/>
    </location>
</feature>